<name>ACHA7_MOUSE</name>
<feature type="signal peptide" evidence="5">
    <location>
        <begin position="1"/>
        <end position="22"/>
    </location>
</feature>
<feature type="chain" id="PRO_0000000368" description="Neuronal acetylcholine receptor subunit alpha-7">
    <location>
        <begin position="23"/>
        <end position="502"/>
    </location>
</feature>
<feature type="topological domain" description="Extracellular" evidence="5">
    <location>
        <begin position="23"/>
        <end position="233"/>
    </location>
</feature>
<feature type="transmembrane region" description="Helical" evidence="5">
    <location>
        <begin position="234"/>
        <end position="254"/>
    </location>
</feature>
<feature type="transmembrane region" description="Helical" evidence="5">
    <location>
        <begin position="262"/>
        <end position="282"/>
    </location>
</feature>
<feature type="transmembrane region" description="Helical" evidence="5">
    <location>
        <begin position="295"/>
        <end position="315"/>
    </location>
</feature>
<feature type="topological domain" description="Cytoplasmic" evidence="5">
    <location>
        <begin position="316"/>
        <end position="469"/>
    </location>
</feature>
<feature type="transmembrane region" description="Helical" evidence="5">
    <location>
        <begin position="470"/>
        <end position="490"/>
    </location>
</feature>
<feature type="region of interest" description="Essential for TMEM35A/NACHO-mediated proper subunit assembly and trafficking to cell membrane" evidence="12">
    <location>
        <begin position="260"/>
        <end position="267"/>
    </location>
</feature>
<feature type="binding site" evidence="2">
    <location>
        <position position="42"/>
    </location>
    <ligand>
        <name>Ca(2+)</name>
        <dbReference type="ChEBI" id="CHEBI:29108"/>
    </ligand>
</feature>
<feature type="binding site" evidence="2">
    <location>
        <position position="44"/>
    </location>
    <ligand>
        <name>Ca(2+)</name>
        <dbReference type="ChEBI" id="CHEBI:29108"/>
    </ligand>
</feature>
<feature type="binding site" evidence="2">
    <location>
        <position position="172"/>
    </location>
    <ligand>
        <name>Ca(2+)</name>
        <dbReference type="ChEBI" id="CHEBI:29108"/>
    </ligand>
</feature>
<feature type="binding site" evidence="2">
    <location>
        <position position="210"/>
    </location>
    <ligand>
        <name>Ca(2+)</name>
        <dbReference type="ChEBI" id="CHEBI:29108"/>
    </ligand>
</feature>
<feature type="glycosylation site" description="N-linked (GlcNAc...) asparagine" evidence="5 15">
    <location>
        <position position="46"/>
    </location>
</feature>
<feature type="glycosylation site" description="N-linked (GlcNAc...) asparagine" evidence="5 15">
    <location>
        <position position="90"/>
    </location>
</feature>
<feature type="glycosylation site" description="N-linked (GlcNAc...) asparagine" evidence="5 15">
    <location>
        <position position="133"/>
    </location>
</feature>
<feature type="disulfide bond" evidence="2">
    <location>
        <begin position="150"/>
        <end position="164"/>
    </location>
</feature>
<feature type="disulfide bond" description="Associated with receptor activation" evidence="2">
    <location>
        <begin position="212"/>
        <end position="213"/>
    </location>
</feature>
<feature type="mutagenesis site" description="Impairs TMEM35A/NACHO-mediated proper subunit assembly and trafficking to cell membrane." evidence="12">
    <original>N</original>
    <variation>A</variation>
    <location>
        <position position="46"/>
    </location>
</feature>
<feature type="mutagenesis site" description="Impairs TMEM35A/NACHO-mediated proper subunit assembly and trafficking to cell membrane." evidence="12">
    <original>N</original>
    <variation>A</variation>
    <location>
        <position position="90"/>
    </location>
</feature>
<feature type="mutagenesis site" description="Impairs TMEM35A/NACHO-mediated proper subunit assembly and trafficking to cell membrane." evidence="12">
    <original>N</original>
    <variation>A</variation>
    <location>
        <position position="133"/>
    </location>
</feature>
<proteinExistence type="evidence at protein level"/>
<accession>P49582</accession>
<protein>
    <recommendedName>
        <fullName>Neuronal acetylcholine receptor subunit alpha-7</fullName>
        <shortName>nAChR7</shortName>
    </recommendedName>
    <alternativeName>
        <fullName>Nicotinic acetylcholine receptor subunit alpha-7</fullName>
    </alternativeName>
</protein>
<evidence type="ECO:0000250" key="1">
    <source>
        <dbReference type="UniProtKB" id="P02709"/>
    </source>
</evidence>
<evidence type="ECO:0000250" key="2">
    <source>
        <dbReference type="UniProtKB" id="P36544"/>
    </source>
</evidence>
<evidence type="ECO:0000250" key="3">
    <source>
        <dbReference type="UniProtKB" id="P54131"/>
    </source>
</evidence>
<evidence type="ECO:0000250" key="4">
    <source>
        <dbReference type="UniProtKB" id="Q05941"/>
    </source>
</evidence>
<evidence type="ECO:0000255" key="5"/>
<evidence type="ECO:0000269" key="6">
    <source>
    </source>
</evidence>
<evidence type="ECO:0000269" key="7">
    <source>
    </source>
</evidence>
<evidence type="ECO:0000269" key="8">
    <source>
    </source>
</evidence>
<evidence type="ECO:0000269" key="9">
    <source>
    </source>
</evidence>
<evidence type="ECO:0000269" key="10">
    <source>
    </source>
</evidence>
<evidence type="ECO:0000269" key="11">
    <source>
    </source>
</evidence>
<evidence type="ECO:0000269" key="12">
    <source>
    </source>
</evidence>
<evidence type="ECO:0000269" key="13">
    <source>
    </source>
</evidence>
<evidence type="ECO:0000305" key="14"/>
<evidence type="ECO:0000305" key="15">
    <source>
    </source>
</evidence>
<organism>
    <name type="scientific">Mus musculus</name>
    <name type="common">Mouse</name>
    <dbReference type="NCBI Taxonomy" id="10090"/>
    <lineage>
        <taxon>Eukaryota</taxon>
        <taxon>Metazoa</taxon>
        <taxon>Chordata</taxon>
        <taxon>Craniata</taxon>
        <taxon>Vertebrata</taxon>
        <taxon>Euteleostomi</taxon>
        <taxon>Mammalia</taxon>
        <taxon>Eutheria</taxon>
        <taxon>Euarchontoglires</taxon>
        <taxon>Glires</taxon>
        <taxon>Rodentia</taxon>
        <taxon>Myomorpha</taxon>
        <taxon>Muroidea</taxon>
        <taxon>Muridae</taxon>
        <taxon>Murinae</taxon>
        <taxon>Mus</taxon>
        <taxon>Mus</taxon>
    </lineage>
</organism>
<dbReference type="EMBL" id="L37663">
    <property type="protein sequence ID" value="AAC42053.1"/>
    <property type="molecule type" value="mRNA"/>
</dbReference>
<dbReference type="CCDS" id="CCDS21329.1"/>
<dbReference type="PIR" id="A57175">
    <property type="entry name" value="A57175"/>
</dbReference>
<dbReference type="RefSeq" id="NP_031416.3">
    <property type="nucleotide sequence ID" value="NM_007390.3"/>
</dbReference>
<dbReference type="SMR" id="P49582"/>
<dbReference type="BioGRID" id="197934">
    <property type="interactions" value="2"/>
</dbReference>
<dbReference type="ComplexPortal" id="CPX-234">
    <property type="entry name" value="Neuronal nicotinic acetylcholine receptor complex, alpha7"/>
</dbReference>
<dbReference type="ComplexPortal" id="CPX-238">
    <property type="entry name" value="Neuronal nicotinic acetylcholine receptor complex, alpha7-beta2"/>
</dbReference>
<dbReference type="DIP" id="DIP-48732N"/>
<dbReference type="FunCoup" id="P49582">
    <property type="interactions" value="875"/>
</dbReference>
<dbReference type="IntAct" id="P49582">
    <property type="interactions" value="4"/>
</dbReference>
<dbReference type="STRING" id="10090.ENSMUSP00000032738"/>
<dbReference type="BindingDB" id="P49582"/>
<dbReference type="ChEMBL" id="CHEMBL3365"/>
<dbReference type="DrugCentral" id="P49582"/>
<dbReference type="GlyCosmos" id="P49582">
    <property type="glycosylation" value="3 sites, No reported glycans"/>
</dbReference>
<dbReference type="GlyGen" id="P49582">
    <property type="glycosylation" value="4 sites"/>
</dbReference>
<dbReference type="iPTMnet" id="P49582"/>
<dbReference type="PhosphoSitePlus" id="P49582"/>
<dbReference type="PaxDb" id="10090-ENSMUSP00000032738"/>
<dbReference type="ProteomicsDB" id="286067"/>
<dbReference type="DNASU" id="11441"/>
<dbReference type="Ensembl" id="ENSMUST00000032738.7">
    <property type="protein sequence ID" value="ENSMUSP00000032738.6"/>
    <property type="gene ID" value="ENSMUSG00000030525.9"/>
</dbReference>
<dbReference type="GeneID" id="11441"/>
<dbReference type="KEGG" id="mmu:11441"/>
<dbReference type="UCSC" id="uc009vel.1">
    <property type="organism name" value="mouse"/>
</dbReference>
<dbReference type="AGR" id="MGI:99779"/>
<dbReference type="CTD" id="1139"/>
<dbReference type="MGI" id="MGI:99779">
    <property type="gene designation" value="Chrna7"/>
</dbReference>
<dbReference type="VEuPathDB" id="HostDB:ENSMUSG00000030525"/>
<dbReference type="eggNOG" id="KOG3646">
    <property type="taxonomic scope" value="Eukaryota"/>
</dbReference>
<dbReference type="GeneTree" id="ENSGT00940000154617"/>
<dbReference type="HOGENOM" id="CLU_018074_0_3_1"/>
<dbReference type="InParanoid" id="P49582"/>
<dbReference type="OMA" id="PWILCMS"/>
<dbReference type="OrthoDB" id="5975154at2759"/>
<dbReference type="PhylomeDB" id="P49582"/>
<dbReference type="TreeFam" id="TF315605"/>
<dbReference type="Reactome" id="R-MMU-629594">
    <property type="pathway name" value="Highly calcium permeable postsynaptic nicotinic acetylcholine receptors"/>
</dbReference>
<dbReference type="BioGRID-ORCS" id="11441">
    <property type="hits" value="5 hits in 77 CRISPR screens"/>
</dbReference>
<dbReference type="ChiTaRS" id="Chrna7">
    <property type="organism name" value="mouse"/>
</dbReference>
<dbReference type="PRO" id="PR:P49582"/>
<dbReference type="Proteomes" id="UP000000589">
    <property type="component" value="Chromosome 7"/>
</dbReference>
<dbReference type="RNAct" id="P49582">
    <property type="molecule type" value="protein"/>
</dbReference>
<dbReference type="Bgee" id="ENSMUSG00000030525">
    <property type="expression patterns" value="Expressed in cerebral cortex marginal layer and 59 other cell types or tissues"/>
</dbReference>
<dbReference type="ExpressionAtlas" id="P49582">
    <property type="expression patterns" value="baseline and differential"/>
</dbReference>
<dbReference type="GO" id="GO:0016324">
    <property type="term" value="C:apical plasma membrane"/>
    <property type="evidence" value="ECO:0000314"/>
    <property type="project" value="MGI"/>
</dbReference>
<dbReference type="GO" id="GO:0030673">
    <property type="term" value="C:axolemma"/>
    <property type="evidence" value="ECO:0000314"/>
    <property type="project" value="MGI"/>
</dbReference>
<dbReference type="GO" id="GO:0098981">
    <property type="term" value="C:cholinergic synapse"/>
    <property type="evidence" value="ECO:0000314"/>
    <property type="project" value="SynGO"/>
</dbReference>
<dbReference type="GO" id="GO:0030425">
    <property type="term" value="C:dendrite"/>
    <property type="evidence" value="ECO:0000250"/>
    <property type="project" value="UniProtKB"/>
</dbReference>
<dbReference type="GO" id="GO:0009897">
    <property type="term" value="C:external side of plasma membrane"/>
    <property type="evidence" value="ECO:0000314"/>
    <property type="project" value="MGI"/>
</dbReference>
<dbReference type="GO" id="GO:0016020">
    <property type="term" value="C:membrane"/>
    <property type="evidence" value="ECO:0000314"/>
    <property type="project" value="MGI"/>
</dbReference>
<dbReference type="GO" id="GO:0005886">
    <property type="term" value="C:plasma membrane"/>
    <property type="evidence" value="ECO:0000314"/>
    <property type="project" value="UniProt"/>
</dbReference>
<dbReference type="GO" id="GO:0045211">
    <property type="term" value="C:postsynaptic membrane"/>
    <property type="evidence" value="ECO:0000314"/>
    <property type="project" value="SynGO"/>
</dbReference>
<dbReference type="GO" id="GO:0099634">
    <property type="term" value="C:postsynaptic specialization membrane"/>
    <property type="evidence" value="ECO:0000314"/>
    <property type="project" value="SynGO"/>
</dbReference>
<dbReference type="GO" id="GO:0098793">
    <property type="term" value="C:presynapse"/>
    <property type="evidence" value="ECO:0000304"/>
    <property type="project" value="ARUK-UCL"/>
</dbReference>
<dbReference type="GO" id="GO:0042734">
    <property type="term" value="C:presynaptic membrane"/>
    <property type="evidence" value="ECO:0000314"/>
    <property type="project" value="SynGO"/>
</dbReference>
<dbReference type="GO" id="GO:0015464">
    <property type="term" value="F:acetylcholine receptor activity"/>
    <property type="evidence" value="ECO:0000314"/>
    <property type="project" value="ARUK-UCL"/>
</dbReference>
<dbReference type="GO" id="GO:0022848">
    <property type="term" value="F:acetylcholine-gated monoatomic cation-selective channel activity"/>
    <property type="evidence" value="ECO:0000314"/>
    <property type="project" value="MGI"/>
</dbReference>
<dbReference type="GO" id="GO:0004888">
    <property type="term" value="F:transmembrane signaling receptor activity"/>
    <property type="evidence" value="ECO:0000314"/>
    <property type="project" value="UniProtKB"/>
</dbReference>
<dbReference type="GO" id="GO:0095500">
    <property type="term" value="P:acetylcholine receptor signaling pathway"/>
    <property type="evidence" value="ECO:0000314"/>
    <property type="project" value="ARUK-UCL"/>
</dbReference>
<dbReference type="GO" id="GO:0008306">
    <property type="term" value="P:associative learning"/>
    <property type="evidence" value="ECO:0000315"/>
    <property type="project" value="MGI"/>
</dbReference>
<dbReference type="GO" id="GO:0042113">
    <property type="term" value="P:B cell activation"/>
    <property type="evidence" value="ECO:0000315"/>
    <property type="project" value="MGI"/>
</dbReference>
<dbReference type="GO" id="GO:0048149">
    <property type="term" value="P:behavioral response to ethanol"/>
    <property type="evidence" value="ECO:0000315"/>
    <property type="project" value="MGI"/>
</dbReference>
<dbReference type="GO" id="GO:0035095">
    <property type="term" value="P:behavioral response to nicotine"/>
    <property type="evidence" value="ECO:0000316"/>
    <property type="project" value="MGI"/>
</dbReference>
<dbReference type="GO" id="GO:0006816">
    <property type="term" value="P:calcium ion transport"/>
    <property type="evidence" value="ECO:0000250"/>
    <property type="project" value="UniProtKB"/>
</dbReference>
<dbReference type="GO" id="GO:0140059">
    <property type="term" value="P:dendrite arborization"/>
    <property type="evidence" value="ECO:0000315"/>
    <property type="project" value="ARUK-UCL"/>
</dbReference>
<dbReference type="GO" id="GO:0097061">
    <property type="term" value="P:dendritic spine organization"/>
    <property type="evidence" value="ECO:0000315"/>
    <property type="project" value="ARUK-UCL"/>
</dbReference>
<dbReference type="GO" id="GO:0006897">
    <property type="term" value="P:endocytosis"/>
    <property type="evidence" value="ECO:0000315"/>
    <property type="project" value="MGI"/>
</dbReference>
<dbReference type="GO" id="GO:0051649">
    <property type="term" value="P:establishment of localization in cell"/>
    <property type="evidence" value="ECO:0000315"/>
    <property type="project" value="MGI"/>
</dbReference>
<dbReference type="GO" id="GO:0030317">
    <property type="term" value="P:flagellated sperm motility"/>
    <property type="evidence" value="ECO:0000315"/>
    <property type="project" value="MGI"/>
</dbReference>
<dbReference type="GO" id="GO:0060112">
    <property type="term" value="P:generation of ovulation cycle rhythm"/>
    <property type="evidence" value="ECO:0000315"/>
    <property type="project" value="MGI"/>
</dbReference>
<dbReference type="GO" id="GO:0007611">
    <property type="term" value="P:learning or memory"/>
    <property type="evidence" value="ECO:0000316"/>
    <property type="project" value="ARUK-UCL"/>
</dbReference>
<dbReference type="GO" id="GO:0007613">
    <property type="term" value="P:memory"/>
    <property type="evidence" value="ECO:0000315"/>
    <property type="project" value="MGI"/>
</dbReference>
<dbReference type="GO" id="GO:0050804">
    <property type="term" value="P:modulation of chemical synaptic transmission"/>
    <property type="evidence" value="ECO:0000316"/>
    <property type="project" value="ARUK-UCL"/>
</dbReference>
<dbReference type="GO" id="GO:0098815">
    <property type="term" value="P:modulation of excitatory postsynaptic potential"/>
    <property type="evidence" value="ECO:0000314"/>
    <property type="project" value="ARUK-UCL"/>
</dbReference>
<dbReference type="GO" id="GO:0006811">
    <property type="term" value="P:monoatomic ion transport"/>
    <property type="evidence" value="ECO:0000315"/>
    <property type="project" value="MGI"/>
</dbReference>
<dbReference type="GO" id="GO:0043124">
    <property type="term" value="P:negative regulation of canonical NF-kappaB signal transduction"/>
    <property type="evidence" value="ECO:0000314"/>
    <property type="project" value="UniProtKB"/>
</dbReference>
<dbReference type="GO" id="GO:1900016">
    <property type="term" value="P:negative regulation of cytokine production involved in inflammatory response"/>
    <property type="evidence" value="ECO:0000314"/>
    <property type="project" value="UniProtKB"/>
</dbReference>
<dbReference type="GO" id="GO:0050728">
    <property type="term" value="P:negative regulation of inflammatory response"/>
    <property type="evidence" value="ECO:0000315"/>
    <property type="project" value="MGI"/>
</dbReference>
<dbReference type="GO" id="GO:0032691">
    <property type="term" value="P:negative regulation of interleukin-1 beta production"/>
    <property type="evidence" value="ECO:0000315"/>
    <property type="project" value="MGI"/>
</dbReference>
<dbReference type="GO" id="GO:0032715">
    <property type="term" value="P:negative regulation of interleukin-6 production"/>
    <property type="evidence" value="ECO:0000315"/>
    <property type="project" value="MGI"/>
</dbReference>
<dbReference type="GO" id="GO:0032720">
    <property type="term" value="P:negative regulation of tumor necrosis factor production"/>
    <property type="evidence" value="ECO:0000315"/>
    <property type="project" value="MGI"/>
</dbReference>
<dbReference type="GO" id="GO:0042698">
    <property type="term" value="P:ovulation cycle"/>
    <property type="evidence" value="ECO:0000315"/>
    <property type="project" value="MGI"/>
</dbReference>
<dbReference type="GO" id="GO:1902004">
    <property type="term" value="P:positive regulation of amyloid-beta formation"/>
    <property type="evidence" value="ECO:0000316"/>
    <property type="project" value="ARUK-UCL"/>
</dbReference>
<dbReference type="GO" id="GO:0070374">
    <property type="term" value="P:positive regulation of ERK1 and ERK2 cascade"/>
    <property type="evidence" value="ECO:0000314"/>
    <property type="project" value="ARUK-UCL"/>
</dbReference>
<dbReference type="GO" id="GO:2000463">
    <property type="term" value="P:positive regulation of excitatory postsynaptic potential"/>
    <property type="evidence" value="ECO:0000316"/>
    <property type="project" value="ARUK-UCL"/>
</dbReference>
<dbReference type="GO" id="GO:0001988">
    <property type="term" value="P:positive regulation of heart rate involved in baroreceptor response to decreased systemic arterial blood pressure"/>
    <property type="evidence" value="ECO:0000315"/>
    <property type="project" value="MGI"/>
</dbReference>
<dbReference type="GO" id="GO:1900273">
    <property type="term" value="P:positive regulation of long-term synaptic potentiation"/>
    <property type="evidence" value="ECO:0000314"/>
    <property type="project" value="ARUK-UCL"/>
</dbReference>
<dbReference type="GO" id="GO:0051247">
    <property type="term" value="P:positive regulation of protein metabolic process"/>
    <property type="evidence" value="ECO:0000316"/>
    <property type="project" value="ARUK-UCL"/>
</dbReference>
<dbReference type="GO" id="GO:1905906">
    <property type="term" value="P:regulation of amyloid fibril formation"/>
    <property type="evidence" value="ECO:0000316"/>
    <property type="project" value="ARUK-UCL"/>
</dbReference>
<dbReference type="GO" id="GO:0050727">
    <property type="term" value="P:regulation of inflammatory response"/>
    <property type="evidence" value="ECO:0000315"/>
    <property type="project" value="MGI"/>
</dbReference>
<dbReference type="GO" id="GO:0042391">
    <property type="term" value="P:regulation of membrane potential"/>
    <property type="evidence" value="ECO:0000315"/>
    <property type="project" value="MGI"/>
</dbReference>
<dbReference type="GO" id="GO:0014061">
    <property type="term" value="P:regulation of norepinephrine secretion"/>
    <property type="evidence" value="ECO:0000315"/>
    <property type="project" value="MGI"/>
</dbReference>
<dbReference type="GO" id="GO:0051823">
    <property type="term" value="P:regulation of synapse structural plasticity"/>
    <property type="evidence" value="ECO:0000315"/>
    <property type="project" value="ARUK-UCL"/>
</dbReference>
<dbReference type="GO" id="GO:0032225">
    <property type="term" value="P:regulation of synaptic transmission, dopaminergic"/>
    <property type="evidence" value="ECO:0000315"/>
    <property type="project" value="MGI"/>
</dbReference>
<dbReference type="GO" id="GO:1904645">
    <property type="term" value="P:response to amyloid-beta"/>
    <property type="evidence" value="ECO:0000315"/>
    <property type="project" value="ARUK-UCL"/>
</dbReference>
<dbReference type="GO" id="GO:0009409">
    <property type="term" value="P:response to cold"/>
    <property type="evidence" value="ECO:0000314"/>
    <property type="project" value="ARUK-UCL"/>
</dbReference>
<dbReference type="GO" id="GO:0045471">
    <property type="term" value="P:response to ethanol"/>
    <property type="evidence" value="ECO:0000315"/>
    <property type="project" value="MGI"/>
</dbReference>
<dbReference type="GO" id="GO:0032094">
    <property type="term" value="P:response to food"/>
    <property type="evidence" value="ECO:0000315"/>
    <property type="project" value="MGI"/>
</dbReference>
<dbReference type="GO" id="GO:0035094">
    <property type="term" value="P:response to nicotine"/>
    <property type="evidence" value="ECO:0000315"/>
    <property type="project" value="MGI"/>
</dbReference>
<dbReference type="GO" id="GO:0050893">
    <property type="term" value="P:sensory processing"/>
    <property type="evidence" value="ECO:0000314"/>
    <property type="project" value="ARUK-UCL"/>
</dbReference>
<dbReference type="GO" id="GO:0050808">
    <property type="term" value="P:synapse organization"/>
    <property type="evidence" value="ECO:0000316"/>
    <property type="project" value="ARUK-UCL"/>
</dbReference>
<dbReference type="GO" id="GO:0007271">
    <property type="term" value="P:synaptic transmission, cholinergic"/>
    <property type="evidence" value="ECO:0000315"/>
    <property type="project" value="MGI"/>
</dbReference>
<dbReference type="GO" id="GO:0042110">
    <property type="term" value="P:T cell activation"/>
    <property type="evidence" value="ECO:0000315"/>
    <property type="project" value="MGI"/>
</dbReference>
<dbReference type="CDD" id="cd19020">
    <property type="entry name" value="LGIC_ECD_nAChR_A7"/>
    <property type="match status" value="1"/>
</dbReference>
<dbReference type="CDD" id="cd19051">
    <property type="entry name" value="LGIC_TM_cation"/>
    <property type="match status" value="1"/>
</dbReference>
<dbReference type="FunFam" id="1.20.58.390:FF:000007">
    <property type="entry name" value="Neuronal acetylcholine receptor subunit alpha-7"/>
    <property type="match status" value="1"/>
</dbReference>
<dbReference type="FunFam" id="2.70.170.10:FF:000009">
    <property type="entry name" value="Neuronal acetylcholine receptor subunit alpha-7"/>
    <property type="match status" value="1"/>
</dbReference>
<dbReference type="FunFam" id="1.20.58.390:FF:000011">
    <property type="entry name" value="neuronal acetylcholine receptor subunit alpha-7"/>
    <property type="match status" value="1"/>
</dbReference>
<dbReference type="Gene3D" id="2.70.170.10">
    <property type="entry name" value="Neurotransmitter-gated ion-channel ligand-binding domain"/>
    <property type="match status" value="1"/>
</dbReference>
<dbReference type="Gene3D" id="1.20.58.390">
    <property type="entry name" value="Neurotransmitter-gated ion-channel transmembrane domain"/>
    <property type="match status" value="2"/>
</dbReference>
<dbReference type="InterPro" id="IPR006202">
    <property type="entry name" value="Neur_chan_lig-bd"/>
</dbReference>
<dbReference type="InterPro" id="IPR036734">
    <property type="entry name" value="Neur_chan_lig-bd_sf"/>
</dbReference>
<dbReference type="InterPro" id="IPR006201">
    <property type="entry name" value="Neur_channel"/>
</dbReference>
<dbReference type="InterPro" id="IPR036719">
    <property type="entry name" value="Neuro-gated_channel_TM_sf"/>
</dbReference>
<dbReference type="InterPro" id="IPR038050">
    <property type="entry name" value="Neuro_actylchol_rec"/>
</dbReference>
<dbReference type="InterPro" id="IPR006029">
    <property type="entry name" value="Neurotrans-gated_channel_TM"/>
</dbReference>
<dbReference type="InterPro" id="IPR018000">
    <property type="entry name" value="Neurotransmitter_ion_chnl_CS"/>
</dbReference>
<dbReference type="InterPro" id="IPR002394">
    <property type="entry name" value="Nicotinic_acetylcholine_rcpt"/>
</dbReference>
<dbReference type="NCBIfam" id="TIGR00860">
    <property type="entry name" value="LIC"/>
    <property type="match status" value="1"/>
</dbReference>
<dbReference type="PANTHER" id="PTHR18945">
    <property type="entry name" value="NEUROTRANSMITTER GATED ION CHANNEL"/>
    <property type="match status" value="1"/>
</dbReference>
<dbReference type="Pfam" id="PF02931">
    <property type="entry name" value="Neur_chan_LBD"/>
    <property type="match status" value="1"/>
</dbReference>
<dbReference type="Pfam" id="PF02932">
    <property type="entry name" value="Neur_chan_memb"/>
    <property type="match status" value="1"/>
</dbReference>
<dbReference type="PRINTS" id="PR00254">
    <property type="entry name" value="NICOTINICR"/>
</dbReference>
<dbReference type="PRINTS" id="PR00252">
    <property type="entry name" value="NRIONCHANNEL"/>
</dbReference>
<dbReference type="SUPFAM" id="SSF90112">
    <property type="entry name" value="Neurotransmitter-gated ion-channel transmembrane pore"/>
    <property type="match status" value="1"/>
</dbReference>
<dbReference type="SUPFAM" id="SSF63712">
    <property type="entry name" value="Nicotinic receptor ligand binding domain-like"/>
    <property type="match status" value="1"/>
</dbReference>
<dbReference type="PROSITE" id="PS00236">
    <property type="entry name" value="NEUROTR_ION_CHANNEL"/>
    <property type="match status" value="1"/>
</dbReference>
<sequence length="502" mass="56632">MCGRRGGIWLALAAALLHVSLQGEFQRRLYKELVKNYNPLERPVANDSQPLTVYFSLSLLQIMDVDEKNQVLTTNIWLQMSWTDHYLQWNMSEYPGVKNVRFPDGQIWKPDILLYNSADERFDATFHTNVLVNASGHCQYLPPGIFKSSCYIDVRWFPFDVQQCKLKFGSWSYGGWSLDLQMQEADISSYIPNGEWDLMGIPGKRNEKFYECCKEPYPDVTYTVTMRRRTLYYGLNLLIPCVLISALALLVFLLPADSGEKISLGITVLLSLTVFMLLVAEIMPATSDSVPLIAQYFASTMIIVGLSVVVTVIVLRYHHHDPDGGKMPKWTRIILLNWCAWFLRMKRPGEDKVRPACQHKPRRCSLASVELSAGAGPPTSNGNLLYIGFRGLEGMHCAPTPDSGVVCGRLACSPTHDEHLMHGTHPSDGDPDLAKILEEVRYIANRFRCQDESEVICSEWKFAACVVDRLCLMAFSVFTIICTIGILMSAPNFVEAVSKDFA</sequence>
<reference key="1">
    <citation type="journal article" date="1995" name="Genomics">
        <title>Cloning and mapping of the mouse alpha 7-neuronal nicotinic acetylcholine receptor.</title>
        <authorList>
            <person name="Orr-Urtreger A."/>
            <person name="Seldin M.F."/>
            <person name="Baldini A."/>
            <person name="Beaudet A.L."/>
        </authorList>
    </citation>
    <scope>NUCLEOTIDE SEQUENCE [MRNA]</scope>
    <source>
        <strain>BALB/cJ</strain>
        <tissue>Brain</tissue>
    </source>
</reference>
<reference key="2">
    <citation type="journal article" date="2003" name="Nature">
        <title>Nicotinic acetylcholine receptor alpha7 subunit is an essential regulator of inflammation.</title>
        <authorList>
            <person name="Wang H."/>
            <person name="Yu M."/>
            <person name="Ochani M."/>
            <person name="Amella C.A."/>
            <person name="Tanovic M."/>
            <person name="Susarla S."/>
            <person name="Li J.H."/>
            <person name="Wang H."/>
            <person name="Yang H."/>
            <person name="Ulloa L."/>
            <person name="Al-Abed Y."/>
            <person name="Czura C.J."/>
            <person name="Tracey K.J."/>
        </authorList>
    </citation>
    <scope>FUNCTION</scope>
    <scope>TISSUE SPECIFICITY</scope>
    <scope>ACTIVITY REGULATION</scope>
</reference>
<reference key="3">
    <citation type="journal article" date="2004" name="Nat. Med.">
        <title>Cholinergic agonists inhibit HMGB1 release and improve survival in experimental sepsis.</title>
        <authorList>
            <person name="Wang H."/>
            <person name="Liao H."/>
            <person name="Ochani M."/>
            <person name="Justiniani M."/>
            <person name="Lin X."/>
            <person name="Yang L."/>
            <person name="Al-Abed Y."/>
            <person name="Wang H."/>
            <person name="Metz C."/>
            <person name="Miller E.J."/>
            <person name="Tracey K.J."/>
            <person name="Ulloa L."/>
        </authorList>
    </citation>
    <scope>FUNCTION</scope>
    <scope>ACTIVITY REGULATION</scope>
</reference>
<reference key="4">
    <citation type="journal article" date="2005" name="Nat. Immunol.">
        <title>Stimulation of the vagus nerve attenuates macrophage activation by activating the Jak2-STAT3 signaling pathway.</title>
        <authorList>
            <person name="de Jonge W.J."/>
            <person name="van der Zanden E.P."/>
            <person name="The F.O."/>
            <person name="Bijlsma M.F."/>
            <person name="van Westerloo D.J."/>
            <person name="Bennink R.J."/>
            <person name="Berthoud H.R."/>
            <person name="Uematsu S."/>
            <person name="Akira S."/>
            <person name="van den Wijngaard R.M."/>
            <person name="Boeckxstaens G.E."/>
        </authorList>
    </citation>
    <scope>FUNCTION</scope>
    <scope>ACTIVITY REGULATION</scope>
    <scope>TISSUE SPECIFICITY</scope>
</reference>
<reference key="5">
    <citation type="journal article" date="2011" name="Antioxid. Redox Signal.">
        <title>Stimulation of alpha7 nicotinic acetylcholine receptor by nicotine attenuates inflammatory response in macrophages and improves survival in experimental model of sepsis through heme oxygenase-1 induction.</title>
        <authorList>
            <person name="Tsoyi K."/>
            <person name="Jang H.J."/>
            <person name="Kim J.W."/>
            <person name="Chang H.K."/>
            <person name="Lee Y.S."/>
            <person name="Pae H.O."/>
            <person name="Kim H.J."/>
            <person name="Seo H.G."/>
            <person name="Lee J.H."/>
            <person name="Chung H.T."/>
            <person name="Chang K.C."/>
        </authorList>
    </citation>
    <scope>FUNCTION</scope>
</reference>
<reference key="6">
    <citation type="journal article" date="2014" name="J. Infect. Dis.">
        <title>Stimulation of the alpha7 nicotinic acetylcholine receptor protects against sepsis by inhibiting Toll-like receptor via phosphoinositide 3-kinase activation.</title>
        <authorList>
            <person name="Kim T.H."/>
            <person name="Kim S.J."/>
            <person name="Lee S.M."/>
        </authorList>
    </citation>
    <scope>FUNCTION</scope>
</reference>
<reference key="7">
    <citation type="journal article" date="2014" name="PLoS ONE">
        <title>A new IRAK-M-mediated mechanism implicated in the anti-inflammatory effect of nicotine via alpha7 nicotinic receptors in human macrophages.</title>
        <authorList>
            <person name="Maldifassi M.C."/>
            <person name="Atienza G."/>
            <person name="Arnalich F."/>
            <person name="Lopez-Collazo E."/>
            <person name="Cedillo J.L."/>
            <person name="Martin-Sanchez C."/>
            <person name="Bordas A."/>
            <person name="Renart J."/>
            <person name="Montiel C."/>
        </authorList>
    </citation>
    <scope>FUNCTION</scope>
</reference>
<reference key="8">
    <citation type="journal article" date="2020" name="Cell Rep.">
        <title>NACHO Engages N-Glycosylation ER Chaperone Pathways for alpha7 Nicotinic Receptor Assembly.</title>
        <authorList>
            <person name="Kweon H.J."/>
            <person name="Gu S."/>
            <person name="Witham E."/>
            <person name="Dhara M."/>
            <person name="Yu H."/>
            <person name="Mandon E.D."/>
            <person name="Jawhari A."/>
            <person name="Bredt D.S."/>
        </authorList>
    </citation>
    <scope>SUBUNIT</scope>
    <scope>SUBCELLULAR LOCATION</scope>
    <scope>GLYCOSYLATION AT ASN-46; ASN-90 AND ASN-133</scope>
    <scope>MUTAGENESIS OF ASN-46; ASN-90 AND ASN-133</scope>
    <scope>REGION</scope>
</reference>
<reference key="9">
    <citation type="journal article" date="2021" name="J. Neurosci.">
        <title>Implications of Oligomeric Amyloid-Beta (oAbeta42) Signaling through alpha7beta2-Nicotinic Acetylcholine Receptors (nAChRs) on Basal Forebrain Cholinergic Neuronal Intrinsic Excitability and Cognitive Decline.</title>
        <authorList>
            <person name="George A.A."/>
            <person name="Vieira J.M."/>
            <person name="Xavier-Jackson C."/>
            <person name="Gee M.T."/>
            <person name="Cirrito J.R."/>
            <person name="Bimonte-Nelson H.A."/>
            <person name="Picciotto M.R."/>
            <person name="Lukas R.J."/>
            <person name="Whiteaker P."/>
        </authorList>
    </citation>
    <scope>FUNCTION</scope>
    <scope>ACTIVITY REGULATION</scope>
</reference>
<gene>
    <name type="primary">Chrna7</name>
    <name type="synonym">Acra7</name>
</gene>
<comment type="function">
    <text evidence="2 4 6 7 8 9 10 11 13">Component of neuronal acetylcholine receptors (nAChRs) that function as pentameric, ligand-gated cation channels with high calcium permeability among other activities. nAChRs are excitatory neurotrasnmitter receptors formed by a collection of nAChR subunits known to mediate synaptic transmission in the nervous system and the neuromuscular junction. Each nAchR subunit confers differential attributes to channel properties, including activation, deactivation and desensitization kinetics, pH sensitivity, cation permeability, and binding to allosteric modulators. CHRNA7 forms homopentameric neuronal acetylcholine receptors abundantly expressed in the central nervous system, characterized by fast desensitization and high calcium permeability. Also forms heteropentamers with CHRNB2, mainly expressed in basal forebrain cholinergic neurons. Involved in the modulation of calcium-dependent signaling pathways and influences the release of neurotransmitters, including dopamine, glutamate and GABA. Involved in the modulation of calcium-dependent signaling pathways and influences the release of neurotransmitters, including dopamine, glutamate and GABA (PubMed:33239400). Also expressed in non-neuronal cells such as immune cells like lymphocytes, monocytes and macrophages (PubMed:12508119). In T cells, activation induces metabotropic signaling that results in an increase of intracellular Ca2+ concentrations, independent of ionotropic receptor functions (By similarity). In macrophages, required for acetylcholine-mediated inhibition of TNF and other inflammatory cytokine release. Once activated by acetylcholine, nicotine or other agonists, selectively inhibits production of pro-inflammatory cytokines while leaving anti-inflammatory cytokines undisturbed (PubMed:12508119, PubMed:21083424, PubMed:24298024, PubMed:25259522). Stimulates the cholinergic anti-inflammatory pathway, controlling inflammation by inhibiting NFKB nuclear translocation and activating the JAK2-STAT3 pathway, independently of ion channel activity (PubMed:15502843, PubMed:16025117, PubMed:25259522). Also expressed in the urothelium where it modulates reflex bladder activity by increasing intracellular calcium through internal stores and decreasing basal ATP release (By similarity).</text>
</comment>
<comment type="catalytic activity">
    <reaction evidence="1">
        <text>K(+)(in) = K(+)(out)</text>
        <dbReference type="Rhea" id="RHEA:29463"/>
        <dbReference type="ChEBI" id="CHEBI:29103"/>
    </reaction>
</comment>
<comment type="catalytic activity">
    <reaction evidence="1">
        <text>Na(+)(in) = Na(+)(out)</text>
        <dbReference type="Rhea" id="RHEA:34963"/>
        <dbReference type="ChEBI" id="CHEBI:29101"/>
    </reaction>
</comment>
<comment type="catalytic activity">
    <reaction evidence="2">
        <text>Ca(2+)(in) = Ca(2+)(out)</text>
        <dbReference type="Rhea" id="RHEA:29671"/>
        <dbReference type="ChEBI" id="CHEBI:29108"/>
    </reaction>
</comment>
<comment type="catalytic activity">
    <reaction evidence="2">
        <text>choline(out) = choline(in)</text>
        <dbReference type="Rhea" id="RHEA:32751"/>
        <dbReference type="ChEBI" id="CHEBI:15354"/>
    </reaction>
</comment>
<comment type="catalytic activity">
    <reaction evidence="2">
        <text>NH4(+)(in) = NH4(+)(out)</text>
        <dbReference type="Rhea" id="RHEA:28747"/>
        <dbReference type="ChEBI" id="CHEBI:28938"/>
    </reaction>
</comment>
<comment type="catalytic activity">
    <reaction evidence="2">
        <text>L-arginine(in) = L-arginine(out)</text>
        <dbReference type="Rhea" id="RHEA:32143"/>
        <dbReference type="ChEBI" id="CHEBI:32682"/>
    </reaction>
</comment>
<comment type="catalytic activity">
    <reaction evidence="2">
        <text>guanidine(out) = guanidine(in)</text>
        <dbReference type="Rhea" id="RHEA:73883"/>
        <dbReference type="ChEBI" id="CHEBI:30087"/>
    </reaction>
</comment>
<comment type="activity regulation">
    <text evidence="2 6 7 8 13">Activated by a myriad of ligands such as acetylcholine, cytisine, nicotine, choline and epibatidine (PubMed:12508119, PubMed:15502843, PubMed:16025117). Oligomeric amyloid-beta protein 42 activates specifially CHRNA7:CHRNB2 nAchRs (PubMed:33239400). Activity is modulated by positive allosteric modulators (PAMs), such as flavonoids, with a wide range of chemical diversity, pharmacological sensitivity and efficacy. AChR activity is inhibited by the antagonists alpha-conotoxons RgIA, ImI and ImII, small disulfide-constrained peptides from cone snails (By similarity).</text>
</comment>
<comment type="subunit">
    <text evidence="2 3 4 12">Homopentamer (PubMed:32783947). Can also form heteropentamers with CHRNB2, mainly found in basal forebrain cholinergic neurons. Interacts with RIC3; which is required for proper folding and assembly. Interacts with LYPD6. Interacts with CANX (By similarity).</text>
</comment>
<comment type="subcellular location">
    <subcellularLocation>
        <location evidence="4">Postsynaptic cell membrane</location>
        <topology evidence="5">Multi-pass membrane protein</topology>
    </subcellularLocation>
    <subcellularLocation>
        <location evidence="12">Cell membrane</location>
        <topology evidence="5">Multi-pass membrane protein</topology>
    </subcellularLocation>
    <text evidence="4 12">TMEM35A/NACHO promotes its trafficking to the cell membrane (PubMed:32783947). RIC3 promotes its trafficking to the cell membrane (By similarity).</text>
</comment>
<comment type="tissue specificity">
    <text evidence="6 8">Higly expressed in brain. ALso expressed in immune cells sucha as macrophages.</text>
</comment>
<comment type="PTM">
    <text evidence="12">Glycosylations at Asn-46, Asn-90 and Asn-133 are essential for TMEM35A/NACHO-mediated proper subunit assembly and trafficking to the cell membrane.</text>
</comment>
<comment type="similarity">
    <text evidence="14">Belongs to the ligand-gated ion channel (TC 1.A.9) family. Acetylcholine receptor (TC 1.A.9.1) subfamily. Alpha-7/CHRNA7 sub-subfamily.</text>
</comment>
<keyword id="KW-0106">Calcium</keyword>
<keyword id="KW-1003">Cell membrane</keyword>
<keyword id="KW-1015">Disulfide bond</keyword>
<keyword id="KW-0325">Glycoprotein</keyword>
<keyword id="KW-0407">Ion channel</keyword>
<keyword id="KW-0406">Ion transport</keyword>
<keyword id="KW-1071">Ligand-gated ion channel</keyword>
<keyword id="KW-0472">Membrane</keyword>
<keyword id="KW-0479">Metal-binding</keyword>
<keyword id="KW-0628">Postsynaptic cell membrane</keyword>
<keyword id="KW-0675">Receptor</keyword>
<keyword id="KW-1185">Reference proteome</keyword>
<keyword id="KW-0732">Signal</keyword>
<keyword id="KW-0770">Synapse</keyword>
<keyword id="KW-0812">Transmembrane</keyword>
<keyword id="KW-1133">Transmembrane helix</keyword>
<keyword id="KW-0813">Transport</keyword>